<keyword id="KW-0997">Cell inner membrane</keyword>
<keyword id="KW-1003">Cell membrane</keyword>
<keyword id="KW-0472">Membrane</keyword>
<keyword id="KW-0653">Protein transport</keyword>
<keyword id="KW-1185">Reference proteome</keyword>
<keyword id="KW-0811">Translocation</keyword>
<keyword id="KW-0812">Transmembrane</keyword>
<keyword id="KW-1133">Transmembrane helix</keyword>
<keyword id="KW-0813">Transport</keyword>
<feature type="chain" id="PRO_1000044349" description="Sec-independent protein translocase protein TatA">
    <location>
        <begin position="1"/>
        <end position="76"/>
    </location>
</feature>
<feature type="transmembrane region" description="Helical" evidence="1">
    <location>
        <begin position="1"/>
        <end position="21"/>
    </location>
</feature>
<feature type="region of interest" description="Disordered" evidence="2">
    <location>
        <begin position="43"/>
        <end position="76"/>
    </location>
</feature>
<dbReference type="EMBL" id="CP000569">
    <property type="protein sequence ID" value="ABN75059.1"/>
    <property type="molecule type" value="Genomic_DNA"/>
</dbReference>
<dbReference type="RefSeq" id="WP_005599788.1">
    <property type="nucleotide sequence ID" value="NC_009053.1"/>
</dbReference>
<dbReference type="SMR" id="A3N3S3"/>
<dbReference type="STRING" id="416269.APL_1985"/>
<dbReference type="EnsemblBacteria" id="ABN75059">
    <property type="protein sequence ID" value="ABN75059"/>
    <property type="gene ID" value="APL_1985"/>
</dbReference>
<dbReference type="GeneID" id="48600287"/>
<dbReference type="KEGG" id="apl:APL_1985"/>
<dbReference type="eggNOG" id="COG1826">
    <property type="taxonomic scope" value="Bacteria"/>
</dbReference>
<dbReference type="HOGENOM" id="CLU_086034_5_1_6"/>
<dbReference type="Proteomes" id="UP000001432">
    <property type="component" value="Chromosome"/>
</dbReference>
<dbReference type="GO" id="GO:0033281">
    <property type="term" value="C:TAT protein transport complex"/>
    <property type="evidence" value="ECO:0007669"/>
    <property type="project" value="UniProtKB-UniRule"/>
</dbReference>
<dbReference type="GO" id="GO:0008320">
    <property type="term" value="F:protein transmembrane transporter activity"/>
    <property type="evidence" value="ECO:0007669"/>
    <property type="project" value="UniProtKB-UniRule"/>
</dbReference>
<dbReference type="GO" id="GO:0043953">
    <property type="term" value="P:protein transport by the Tat complex"/>
    <property type="evidence" value="ECO:0007669"/>
    <property type="project" value="UniProtKB-UniRule"/>
</dbReference>
<dbReference type="Gene3D" id="1.20.5.3310">
    <property type="match status" value="1"/>
</dbReference>
<dbReference type="HAMAP" id="MF_00236">
    <property type="entry name" value="TatA_E"/>
    <property type="match status" value="1"/>
</dbReference>
<dbReference type="InterPro" id="IPR003369">
    <property type="entry name" value="TatA/B/E"/>
</dbReference>
<dbReference type="InterPro" id="IPR006312">
    <property type="entry name" value="TatA/E"/>
</dbReference>
<dbReference type="NCBIfam" id="NF002500">
    <property type="entry name" value="PRK01833.1"/>
    <property type="match status" value="1"/>
</dbReference>
<dbReference type="NCBIfam" id="TIGR01411">
    <property type="entry name" value="tatAE"/>
    <property type="match status" value="1"/>
</dbReference>
<dbReference type="PANTHER" id="PTHR42982">
    <property type="entry name" value="SEC-INDEPENDENT PROTEIN TRANSLOCASE PROTEIN TATA"/>
    <property type="match status" value="1"/>
</dbReference>
<dbReference type="PANTHER" id="PTHR42982:SF1">
    <property type="entry name" value="SEC-INDEPENDENT PROTEIN TRANSLOCASE PROTEIN TATA"/>
    <property type="match status" value="1"/>
</dbReference>
<dbReference type="Pfam" id="PF02416">
    <property type="entry name" value="TatA_B_E"/>
    <property type="match status" value="1"/>
</dbReference>
<protein>
    <recommendedName>
        <fullName evidence="1">Sec-independent protein translocase protein TatA</fullName>
    </recommendedName>
</protein>
<comment type="function">
    <text evidence="1">Part of the twin-arginine translocation (Tat) system that transports large folded proteins containing a characteristic twin-arginine motif in their signal peptide across membranes. TatA could form the protein-conducting channel of the Tat system.</text>
</comment>
<comment type="subunit">
    <text evidence="1">The Tat system comprises two distinct complexes: a TatABC complex, containing multiple copies of TatA, TatB and TatC subunits, and a separate TatA complex, containing only TatA subunits. Substrates initially bind to the TatABC complex, which probably triggers association of the separate TatA complex to form the active translocon.</text>
</comment>
<comment type="subcellular location">
    <subcellularLocation>
        <location evidence="1">Cell inner membrane</location>
        <topology evidence="1">Single-pass membrane protein</topology>
    </subcellularLocation>
</comment>
<comment type="similarity">
    <text evidence="1">Belongs to the TatA/E family.</text>
</comment>
<name>TATA_ACTP2</name>
<gene>
    <name evidence="1" type="primary">tatA</name>
    <name type="ordered locus">APL_1985</name>
</gene>
<reference key="1">
    <citation type="journal article" date="2008" name="J. Bacteriol.">
        <title>The complete genome sequence of Actinobacillus pleuropneumoniae L20 (serotype 5b).</title>
        <authorList>
            <person name="Foote S.J."/>
            <person name="Bosse J.T."/>
            <person name="Bouevitch A.B."/>
            <person name="Langford P.R."/>
            <person name="Young N.M."/>
            <person name="Nash J.H.E."/>
        </authorList>
    </citation>
    <scope>NUCLEOTIDE SEQUENCE [LARGE SCALE GENOMIC DNA]</scope>
    <source>
        <strain>L20</strain>
    </source>
</reference>
<accession>A3N3S3</accession>
<organism>
    <name type="scientific">Actinobacillus pleuropneumoniae serotype 5b (strain L20)</name>
    <dbReference type="NCBI Taxonomy" id="416269"/>
    <lineage>
        <taxon>Bacteria</taxon>
        <taxon>Pseudomonadati</taxon>
        <taxon>Pseudomonadota</taxon>
        <taxon>Gammaproteobacteria</taxon>
        <taxon>Pasteurellales</taxon>
        <taxon>Pasteurellaceae</taxon>
        <taxon>Actinobacillus</taxon>
    </lineage>
</organism>
<sequence>MGGISIWQLLIIVAIIVLLFGTKKLRTLGTDLGESVKGFKKAMADDKSQPQDASFEKVEAKEAASTEQKAKEKEQA</sequence>
<proteinExistence type="inferred from homology"/>
<evidence type="ECO:0000255" key="1">
    <source>
        <dbReference type="HAMAP-Rule" id="MF_00236"/>
    </source>
</evidence>
<evidence type="ECO:0000256" key="2">
    <source>
        <dbReference type="SAM" id="MobiDB-lite"/>
    </source>
</evidence>